<organism>
    <name type="scientific">Bacillus cereus (strain ZK / E33L)</name>
    <dbReference type="NCBI Taxonomy" id="288681"/>
    <lineage>
        <taxon>Bacteria</taxon>
        <taxon>Bacillati</taxon>
        <taxon>Bacillota</taxon>
        <taxon>Bacilli</taxon>
        <taxon>Bacillales</taxon>
        <taxon>Bacillaceae</taxon>
        <taxon>Bacillus</taxon>
        <taxon>Bacillus cereus group</taxon>
    </lineage>
</organism>
<protein>
    <recommendedName>
        <fullName evidence="1">UDP-N-acetylmuramoylalanine--D-glutamate ligase</fullName>
        <ecNumber evidence="1">6.3.2.9</ecNumber>
    </recommendedName>
    <alternativeName>
        <fullName evidence="1">D-glutamic acid-adding enzyme</fullName>
    </alternativeName>
    <alternativeName>
        <fullName evidence="1">UDP-N-acetylmuramoyl-L-alanyl-D-glutamate synthetase</fullName>
    </alternativeName>
</protein>
<keyword id="KW-0067">ATP-binding</keyword>
<keyword id="KW-0131">Cell cycle</keyword>
<keyword id="KW-0132">Cell division</keyword>
<keyword id="KW-0133">Cell shape</keyword>
<keyword id="KW-0961">Cell wall biogenesis/degradation</keyword>
<keyword id="KW-0963">Cytoplasm</keyword>
<keyword id="KW-0436">Ligase</keyword>
<keyword id="KW-0547">Nucleotide-binding</keyword>
<keyword id="KW-0573">Peptidoglycan synthesis</keyword>
<feature type="chain" id="PRO_0000108962" description="UDP-N-acetylmuramoylalanine--D-glutamate ligase">
    <location>
        <begin position="1"/>
        <end position="450"/>
    </location>
</feature>
<feature type="binding site" evidence="1">
    <location>
        <begin position="119"/>
        <end position="125"/>
    </location>
    <ligand>
        <name>ATP</name>
        <dbReference type="ChEBI" id="CHEBI:30616"/>
    </ligand>
</feature>
<evidence type="ECO:0000255" key="1">
    <source>
        <dbReference type="HAMAP-Rule" id="MF_00639"/>
    </source>
</evidence>
<proteinExistence type="inferred from homology"/>
<name>MURD_BACCZ</name>
<accession>Q636B4</accession>
<gene>
    <name evidence="1" type="primary">murD</name>
    <name type="ordered locus">BCE33L3671</name>
</gene>
<sequence>MKTVTEFQNKNILVLGIAKSGYAAATLLQKLGANVIVNDGKPLAENVLAAELQAKGMDVVCGGHPLELLERNISLVVKNPGIPYSNPILVAAKEKQIPIVTEVELAYRISEAPFVGITGSNGKTTTTMLTFEMLKEGQKHPVIAGNIGTVACEVAQDAKENEVVVTELSSFQLMGVELFQPKIAAFLNLFEAHLDYHGTKKEYGLAKANIFKNQTENDYSVINADDADVMALSAYSKGQKVLFSTTKEIEDGACIKDNALYFKAEKVVEVDDIVLPGQHNLENILAAMSIAKLLGVSNEAITAVLKRFTGVKHRLEYVTTINNRKFYNDSKATNMLATEKALSAFTQPTVLLAGGLDRGNEFDDLIPYFKNVKAIVTFGQTAPKLVRAAEKAGLDTIESVDTLDEAVVKAYAHSTDGDVILLSPACASWDQFKTFEERGDIFIQAVHKLI</sequence>
<comment type="function">
    <text evidence="1">Cell wall formation. Catalyzes the addition of glutamate to the nucleotide precursor UDP-N-acetylmuramoyl-L-alanine (UMA).</text>
</comment>
<comment type="catalytic activity">
    <reaction evidence="1">
        <text>UDP-N-acetyl-alpha-D-muramoyl-L-alanine + D-glutamate + ATP = UDP-N-acetyl-alpha-D-muramoyl-L-alanyl-D-glutamate + ADP + phosphate + H(+)</text>
        <dbReference type="Rhea" id="RHEA:16429"/>
        <dbReference type="ChEBI" id="CHEBI:15378"/>
        <dbReference type="ChEBI" id="CHEBI:29986"/>
        <dbReference type="ChEBI" id="CHEBI:30616"/>
        <dbReference type="ChEBI" id="CHEBI:43474"/>
        <dbReference type="ChEBI" id="CHEBI:83898"/>
        <dbReference type="ChEBI" id="CHEBI:83900"/>
        <dbReference type="ChEBI" id="CHEBI:456216"/>
        <dbReference type="EC" id="6.3.2.9"/>
    </reaction>
</comment>
<comment type="pathway">
    <text evidence="1">Cell wall biogenesis; peptidoglycan biosynthesis.</text>
</comment>
<comment type="subcellular location">
    <subcellularLocation>
        <location evidence="1">Cytoplasm</location>
    </subcellularLocation>
</comment>
<comment type="similarity">
    <text evidence="1">Belongs to the MurCDEF family.</text>
</comment>
<dbReference type="EC" id="6.3.2.9" evidence="1"/>
<dbReference type="EMBL" id="CP000001">
    <property type="protein sequence ID" value="AAU16595.1"/>
    <property type="molecule type" value="Genomic_DNA"/>
</dbReference>
<dbReference type="RefSeq" id="WP_000860119.1">
    <property type="nucleotide sequence ID" value="NZ_CP009968.1"/>
</dbReference>
<dbReference type="SMR" id="Q636B4"/>
<dbReference type="GeneID" id="45023741"/>
<dbReference type="KEGG" id="bcz:BCE33L3671"/>
<dbReference type="PATRIC" id="fig|288681.22.peg.1740"/>
<dbReference type="UniPathway" id="UPA00219"/>
<dbReference type="Proteomes" id="UP000002612">
    <property type="component" value="Chromosome"/>
</dbReference>
<dbReference type="GO" id="GO:0005737">
    <property type="term" value="C:cytoplasm"/>
    <property type="evidence" value="ECO:0007669"/>
    <property type="project" value="UniProtKB-SubCell"/>
</dbReference>
<dbReference type="GO" id="GO:0005524">
    <property type="term" value="F:ATP binding"/>
    <property type="evidence" value="ECO:0007669"/>
    <property type="project" value="UniProtKB-UniRule"/>
</dbReference>
<dbReference type="GO" id="GO:0008764">
    <property type="term" value="F:UDP-N-acetylmuramoylalanine-D-glutamate ligase activity"/>
    <property type="evidence" value="ECO:0007669"/>
    <property type="project" value="UniProtKB-UniRule"/>
</dbReference>
<dbReference type="GO" id="GO:0051301">
    <property type="term" value="P:cell division"/>
    <property type="evidence" value="ECO:0007669"/>
    <property type="project" value="UniProtKB-KW"/>
</dbReference>
<dbReference type="GO" id="GO:0071555">
    <property type="term" value="P:cell wall organization"/>
    <property type="evidence" value="ECO:0007669"/>
    <property type="project" value="UniProtKB-KW"/>
</dbReference>
<dbReference type="GO" id="GO:0009252">
    <property type="term" value="P:peptidoglycan biosynthetic process"/>
    <property type="evidence" value="ECO:0007669"/>
    <property type="project" value="UniProtKB-UniRule"/>
</dbReference>
<dbReference type="GO" id="GO:0008360">
    <property type="term" value="P:regulation of cell shape"/>
    <property type="evidence" value="ECO:0007669"/>
    <property type="project" value="UniProtKB-KW"/>
</dbReference>
<dbReference type="Gene3D" id="3.90.190.20">
    <property type="entry name" value="Mur ligase, C-terminal domain"/>
    <property type="match status" value="1"/>
</dbReference>
<dbReference type="Gene3D" id="3.40.1190.10">
    <property type="entry name" value="Mur-like, catalytic domain"/>
    <property type="match status" value="1"/>
</dbReference>
<dbReference type="Gene3D" id="3.40.50.720">
    <property type="entry name" value="NAD(P)-binding Rossmann-like Domain"/>
    <property type="match status" value="1"/>
</dbReference>
<dbReference type="HAMAP" id="MF_00639">
    <property type="entry name" value="MurD"/>
    <property type="match status" value="1"/>
</dbReference>
<dbReference type="InterPro" id="IPR036565">
    <property type="entry name" value="Mur-like_cat_sf"/>
</dbReference>
<dbReference type="InterPro" id="IPR004101">
    <property type="entry name" value="Mur_ligase_C"/>
</dbReference>
<dbReference type="InterPro" id="IPR036615">
    <property type="entry name" value="Mur_ligase_C_dom_sf"/>
</dbReference>
<dbReference type="InterPro" id="IPR013221">
    <property type="entry name" value="Mur_ligase_cen"/>
</dbReference>
<dbReference type="InterPro" id="IPR005762">
    <property type="entry name" value="MurD"/>
</dbReference>
<dbReference type="NCBIfam" id="TIGR01087">
    <property type="entry name" value="murD"/>
    <property type="match status" value="1"/>
</dbReference>
<dbReference type="PANTHER" id="PTHR43692">
    <property type="entry name" value="UDP-N-ACETYLMURAMOYLALANINE--D-GLUTAMATE LIGASE"/>
    <property type="match status" value="1"/>
</dbReference>
<dbReference type="PANTHER" id="PTHR43692:SF1">
    <property type="entry name" value="UDP-N-ACETYLMURAMOYLALANINE--D-GLUTAMATE LIGASE"/>
    <property type="match status" value="1"/>
</dbReference>
<dbReference type="Pfam" id="PF02875">
    <property type="entry name" value="Mur_ligase_C"/>
    <property type="match status" value="1"/>
</dbReference>
<dbReference type="Pfam" id="PF08245">
    <property type="entry name" value="Mur_ligase_M"/>
    <property type="match status" value="1"/>
</dbReference>
<dbReference type="Pfam" id="PF21799">
    <property type="entry name" value="MurD-like_N"/>
    <property type="match status" value="1"/>
</dbReference>
<dbReference type="SUPFAM" id="SSF51984">
    <property type="entry name" value="MurCD N-terminal domain"/>
    <property type="match status" value="1"/>
</dbReference>
<dbReference type="SUPFAM" id="SSF53623">
    <property type="entry name" value="MurD-like peptide ligases, catalytic domain"/>
    <property type="match status" value="1"/>
</dbReference>
<dbReference type="SUPFAM" id="SSF53244">
    <property type="entry name" value="MurD-like peptide ligases, peptide-binding domain"/>
    <property type="match status" value="1"/>
</dbReference>
<reference key="1">
    <citation type="journal article" date="2006" name="J. Bacteriol.">
        <title>Pathogenomic sequence analysis of Bacillus cereus and Bacillus thuringiensis isolates closely related to Bacillus anthracis.</title>
        <authorList>
            <person name="Han C.S."/>
            <person name="Xie G."/>
            <person name="Challacombe J.F."/>
            <person name="Altherr M.R."/>
            <person name="Bhotika S.S."/>
            <person name="Bruce D."/>
            <person name="Campbell C.S."/>
            <person name="Campbell M.L."/>
            <person name="Chen J."/>
            <person name="Chertkov O."/>
            <person name="Cleland C."/>
            <person name="Dimitrijevic M."/>
            <person name="Doggett N.A."/>
            <person name="Fawcett J.J."/>
            <person name="Glavina T."/>
            <person name="Goodwin L.A."/>
            <person name="Hill K.K."/>
            <person name="Hitchcock P."/>
            <person name="Jackson P.J."/>
            <person name="Keim P."/>
            <person name="Kewalramani A.R."/>
            <person name="Longmire J."/>
            <person name="Lucas S."/>
            <person name="Malfatti S."/>
            <person name="McMurry K."/>
            <person name="Meincke L.J."/>
            <person name="Misra M."/>
            <person name="Moseman B.L."/>
            <person name="Mundt M."/>
            <person name="Munk A.C."/>
            <person name="Okinaka R.T."/>
            <person name="Parson-Quintana B."/>
            <person name="Reilly L.P."/>
            <person name="Richardson P."/>
            <person name="Robinson D.L."/>
            <person name="Rubin E."/>
            <person name="Saunders E."/>
            <person name="Tapia R."/>
            <person name="Tesmer J.G."/>
            <person name="Thayer N."/>
            <person name="Thompson L.S."/>
            <person name="Tice H."/>
            <person name="Ticknor L.O."/>
            <person name="Wills P.L."/>
            <person name="Brettin T.S."/>
            <person name="Gilna P."/>
        </authorList>
    </citation>
    <scope>NUCLEOTIDE SEQUENCE [LARGE SCALE GENOMIC DNA]</scope>
    <source>
        <strain>ZK / E33L</strain>
    </source>
</reference>